<keyword id="KW-0227">DNA damage</keyword>
<keyword id="KW-0234">DNA repair</keyword>
<keyword id="KW-0539">Nucleus</keyword>
<keyword id="KW-1185">Reference proteome</keyword>
<keyword id="KW-0804">Transcription</keyword>
<keyword id="KW-0805">Transcription regulation</keyword>
<evidence type="ECO:0000250" key="1">
    <source>
        <dbReference type="UniProtKB" id="Q92759"/>
    </source>
</evidence>
<evidence type="ECO:0000305" key="2"/>
<gene>
    <name type="primary">Gtf2h4</name>
</gene>
<sequence>MEITPARGGLNRAHLQCRNLQEFLGGLSPGVLDRLYGHPATCLAVFRELPSLAKNWVMRMLFLEQPLPQAAVALWVKKEFSKAQEESTGLLSGLRIWHTQLLPGGLQGLILNPVFRQNLRIALLGGGKAWSDDTSQLGPDKHARDVPSLDKYAEERWEVVLHFMVGSPSAAVSQDLAQLLSQAGLMKSTEPGEPPCITSAGFQFLLLDTPAQLWYFMLQYLQTAQSRGMDLVEILSFLFQLSFSTLGKDYSVEGMSDSLLNFLQHLREFGLVFQRKRKSRRYYPTRLAINLSSGVSGAGGTVHQPGFIVVETNYRLYAYTESELQIALIALFSEMLYRFPNMVVAQVTRESVQQAIASGITAQQIIHFLRTRAHPVMLKQNPVLPPTITDQIRLWELERDRLRFTEGVLYNQFLSQVDFELLLAHARELGVLVFENSAKRLMVVTPAGHSDVKRFWKRQKHSS</sequence>
<proteinExistence type="evidence at protein level"/>
<protein>
    <recommendedName>
        <fullName>General transcription factor IIH subunit 4</fullName>
    </recommendedName>
    <alternativeName>
        <fullName>Basic transcription factor 2 52 kDa subunit</fullName>
        <shortName>BTF2 p52</shortName>
    </alternativeName>
    <alternativeName>
        <fullName>General transcription factor IIH polypeptide 4</fullName>
    </alternativeName>
    <alternativeName>
        <fullName>TFIIH basal transcription factor complex p52 subunit</fullName>
    </alternativeName>
</protein>
<name>TF2H4_MOUSE</name>
<organism>
    <name type="scientific">Mus musculus</name>
    <name type="common">Mouse</name>
    <dbReference type="NCBI Taxonomy" id="10090"/>
    <lineage>
        <taxon>Eukaryota</taxon>
        <taxon>Metazoa</taxon>
        <taxon>Chordata</taxon>
        <taxon>Craniata</taxon>
        <taxon>Vertebrata</taxon>
        <taxon>Euteleostomi</taxon>
        <taxon>Mammalia</taxon>
        <taxon>Eutheria</taxon>
        <taxon>Euarchontoglires</taxon>
        <taxon>Glires</taxon>
        <taxon>Rodentia</taxon>
        <taxon>Myomorpha</taxon>
        <taxon>Muroidea</taxon>
        <taxon>Muridae</taxon>
        <taxon>Murinae</taxon>
        <taxon>Mus</taxon>
        <taxon>Mus</taxon>
    </lineage>
</organism>
<reference key="1">
    <citation type="submission" date="1998-03" db="EMBL/GenBank/DDBJ databases">
        <title>The mouse p52 subunit of the transcription/DNA repair factor TFIIH is located in the class III region of the H-2 complex: cloning and sequence polymorphism.</title>
        <authorList>
            <person name="Lanning D."/>
            <person name="Lafuse W.P."/>
        </authorList>
    </citation>
    <scope>NUCLEOTIDE SEQUENCE [MRNA]</scope>
    <source>
        <strain>C57BL/6J</strain>
        <tissue>T-cell lymphoma</tissue>
    </source>
</reference>
<reference key="2">
    <citation type="journal article" date="2004" name="Genome Res.">
        <title>The status, quality, and expansion of the NIH full-length cDNA project: the Mammalian Gene Collection (MGC).</title>
        <authorList>
            <consortium name="The MGC Project Team"/>
        </authorList>
    </citation>
    <scope>NUCLEOTIDE SEQUENCE [LARGE SCALE MRNA]</scope>
    <source>
        <tissue>Salivary gland</tissue>
    </source>
</reference>
<reference key="3">
    <citation type="journal article" date="2010" name="Cell">
        <title>A tissue-specific atlas of mouse protein phosphorylation and expression.</title>
        <authorList>
            <person name="Huttlin E.L."/>
            <person name="Jedrychowski M.P."/>
            <person name="Elias J.E."/>
            <person name="Goswami T."/>
            <person name="Rad R."/>
            <person name="Beausoleil S.A."/>
            <person name="Villen J."/>
            <person name="Haas W."/>
            <person name="Sowa M.E."/>
            <person name="Gygi S.P."/>
        </authorList>
    </citation>
    <scope>IDENTIFICATION BY MASS SPECTROMETRY [LARGE SCALE ANALYSIS]</scope>
    <source>
        <tissue>Spleen</tissue>
        <tissue>Testis</tissue>
    </source>
</reference>
<accession>O70422</accession>
<comment type="function">
    <text evidence="1">Component of the general transcription and DNA repair factor IIH (TFIIH) core complex, which is involved in general and transcription-coupled nucleotide excision repair (NER) of damaged DNA and, when complexed to CAK, in RNA transcription by RNA polymerase II. In NER, TFIIH acts by opening DNA around the lesion to allow the excision of the damaged oligonucleotide and its replacement by a new DNA fragment. In transcription, TFIIH has an essential role in transcription initiation. When the pre-initiation complex (PIC) has been established, TFIIH is required for promoter opening and promoter escape. Phosphorylation of the C-terminal tail (CTD) of the largest subunit of RNA polymerase II by the kinase module CAK controls the initiation of transcription.</text>
</comment>
<comment type="subunit">
    <text evidence="1">Component of the 7-subunit TFIIH core complex composed of XPB/ERCC3, XPD/ERCC2, GTF2H1, GTF2H2, GTF2H3, GTF2H4 and GTF2H5, which is active in NER. The core complex associates with the 3-subunit CDK-activating kinase (CAK) module composed of CCNH/cyclin H, CDK7 and MNAT1 to form the 10-subunit holoenzyme (holo-TFIIH) active in transcription. Part of TBP-based Pol II pre-initiation complex (PIC), in which Pol II core assembles with general transcription factors and other specific initiation factors including GTF2E1, GTF2E2, GTF2F1, GTF2F2, TCEA1, ERCC2, ERCC3, GTF2H2, GTF2H3, GTF2H4, GTF2H5, GTF2A1, GTF2A2, GTF2B and TBP; this large multi-subunit PIC complex mediates DNA unwinding and targets Pol II core to the transcription start site where the first phosphodiester bond forms.</text>
</comment>
<comment type="subcellular location">
    <subcellularLocation>
        <location>Nucleus</location>
    </subcellularLocation>
</comment>
<comment type="similarity">
    <text evidence="2">Belongs to the TFB2 family.</text>
</comment>
<feature type="chain" id="PRO_0000119254" description="General transcription factor IIH subunit 4">
    <location>
        <begin position="1"/>
        <end position="463"/>
    </location>
</feature>
<dbReference type="EMBL" id="AF054823">
    <property type="protein sequence ID" value="AAC08594.1"/>
    <property type="molecule type" value="mRNA"/>
</dbReference>
<dbReference type="EMBL" id="BC012638">
    <property type="protein sequence ID" value="AAH12638.1"/>
    <property type="molecule type" value="mRNA"/>
</dbReference>
<dbReference type="CCDS" id="CCDS28702.1"/>
<dbReference type="RefSeq" id="NP_001400255.1">
    <property type="nucleotide sequence ID" value="NM_001413326.1"/>
</dbReference>
<dbReference type="RefSeq" id="NP_001400256.1">
    <property type="nucleotide sequence ID" value="NM_001413327.1"/>
</dbReference>
<dbReference type="RefSeq" id="NP_001400257.1">
    <property type="nucleotide sequence ID" value="NM_001413328.1"/>
</dbReference>
<dbReference type="RefSeq" id="NP_034494.1">
    <property type="nucleotide sequence ID" value="NM_010364.5"/>
</dbReference>
<dbReference type="RefSeq" id="XP_006523731.1">
    <property type="nucleotide sequence ID" value="XM_006523668.3"/>
</dbReference>
<dbReference type="RefSeq" id="XP_006523732.1">
    <property type="nucleotide sequence ID" value="XM_006523669.3"/>
</dbReference>
<dbReference type="SMR" id="O70422"/>
<dbReference type="BioGRID" id="200112">
    <property type="interactions" value="2"/>
</dbReference>
<dbReference type="CORUM" id="O70422"/>
<dbReference type="FunCoup" id="O70422">
    <property type="interactions" value="1553"/>
</dbReference>
<dbReference type="IntAct" id="O70422">
    <property type="interactions" value="1"/>
</dbReference>
<dbReference type="STRING" id="10090.ENSMUSP00000001565"/>
<dbReference type="iPTMnet" id="O70422"/>
<dbReference type="PhosphoSitePlus" id="O70422"/>
<dbReference type="SwissPalm" id="O70422"/>
<dbReference type="PaxDb" id="10090-ENSMUSP00000001565"/>
<dbReference type="PeptideAtlas" id="O70422"/>
<dbReference type="ProteomicsDB" id="263112"/>
<dbReference type="Pumba" id="O70422"/>
<dbReference type="Antibodypedia" id="48243">
    <property type="antibodies" value="185 antibodies from 25 providers"/>
</dbReference>
<dbReference type="DNASU" id="14885"/>
<dbReference type="Ensembl" id="ENSMUST00000001565.15">
    <property type="protein sequence ID" value="ENSMUSP00000001565.9"/>
    <property type="gene ID" value="ENSMUSG00000001524.15"/>
</dbReference>
<dbReference type="Ensembl" id="ENSMUST00000160734.8">
    <property type="protein sequence ID" value="ENSMUSP00000124335.2"/>
    <property type="gene ID" value="ENSMUSG00000001524.15"/>
</dbReference>
<dbReference type="GeneID" id="14885"/>
<dbReference type="KEGG" id="mmu:14885"/>
<dbReference type="UCSC" id="uc008cig.2">
    <property type="organism name" value="mouse"/>
</dbReference>
<dbReference type="AGR" id="MGI:1338799"/>
<dbReference type="CTD" id="2968"/>
<dbReference type="MGI" id="MGI:1338799">
    <property type="gene designation" value="Gtf2h4"/>
</dbReference>
<dbReference type="VEuPathDB" id="HostDB:ENSMUSG00000001524"/>
<dbReference type="eggNOG" id="KOG3471">
    <property type="taxonomic scope" value="Eukaryota"/>
</dbReference>
<dbReference type="GeneTree" id="ENSGT00390000014159"/>
<dbReference type="HOGENOM" id="CLU_027280_4_0_1"/>
<dbReference type="InParanoid" id="O70422"/>
<dbReference type="OMA" id="KGFIIIE"/>
<dbReference type="OrthoDB" id="364513at2759"/>
<dbReference type="PhylomeDB" id="O70422"/>
<dbReference type="TreeFam" id="TF300879"/>
<dbReference type="Reactome" id="R-MMU-112382">
    <property type="pathway name" value="Formation of RNA Pol II elongation complex"/>
</dbReference>
<dbReference type="Reactome" id="R-MMU-113418">
    <property type="pathway name" value="Formation of the Early Elongation Complex"/>
</dbReference>
<dbReference type="Reactome" id="R-MMU-5696395">
    <property type="pathway name" value="Formation of Incision Complex in GG-NER"/>
</dbReference>
<dbReference type="Reactome" id="R-MMU-5696400">
    <property type="pathway name" value="Dual Incision in GG-NER"/>
</dbReference>
<dbReference type="Reactome" id="R-MMU-674695">
    <property type="pathway name" value="RNA Polymerase II Pre-transcription Events"/>
</dbReference>
<dbReference type="Reactome" id="R-MMU-6781823">
    <property type="pathway name" value="Formation of TC-NER Pre-Incision Complex"/>
</dbReference>
<dbReference type="Reactome" id="R-MMU-6782135">
    <property type="pathway name" value="Dual incision in TC-NER"/>
</dbReference>
<dbReference type="Reactome" id="R-MMU-6782210">
    <property type="pathway name" value="Gap-filling DNA repair synthesis and ligation in TC-NER"/>
</dbReference>
<dbReference type="Reactome" id="R-MMU-6796648">
    <property type="pathway name" value="TP53 Regulates Transcription of DNA Repair Genes"/>
</dbReference>
<dbReference type="Reactome" id="R-MMU-72086">
    <property type="pathway name" value="mRNA Capping"/>
</dbReference>
<dbReference type="Reactome" id="R-MMU-73762">
    <property type="pathway name" value="RNA Polymerase I Transcription Initiation"/>
</dbReference>
<dbReference type="Reactome" id="R-MMU-73772">
    <property type="pathway name" value="RNA Polymerase I Promoter Escape"/>
</dbReference>
<dbReference type="Reactome" id="R-MMU-73776">
    <property type="pathway name" value="RNA Polymerase II Promoter Escape"/>
</dbReference>
<dbReference type="Reactome" id="R-MMU-73779">
    <property type="pathway name" value="RNA Polymerase II Transcription Pre-Initiation And Promoter Opening"/>
</dbReference>
<dbReference type="Reactome" id="R-MMU-73863">
    <property type="pathway name" value="RNA Polymerase I Transcription Termination"/>
</dbReference>
<dbReference type="Reactome" id="R-MMU-75953">
    <property type="pathway name" value="RNA Polymerase II Transcription Initiation"/>
</dbReference>
<dbReference type="Reactome" id="R-MMU-75955">
    <property type="pathway name" value="RNA Polymerase II Transcription Elongation"/>
</dbReference>
<dbReference type="Reactome" id="R-MMU-76042">
    <property type="pathway name" value="RNA Polymerase II Transcription Initiation And Promoter Clearance"/>
</dbReference>
<dbReference type="Reactome" id="R-MMU-77075">
    <property type="pathway name" value="RNA Pol II CTD phosphorylation and interaction with CE"/>
</dbReference>
<dbReference type="BioGRID-ORCS" id="14885">
    <property type="hits" value="19 hits in 117 CRISPR screens"/>
</dbReference>
<dbReference type="PRO" id="PR:O70422"/>
<dbReference type="Proteomes" id="UP000000589">
    <property type="component" value="Chromosome 17"/>
</dbReference>
<dbReference type="RNAct" id="O70422">
    <property type="molecule type" value="protein"/>
</dbReference>
<dbReference type="Bgee" id="ENSMUSG00000001524">
    <property type="expression patterns" value="Expressed in thymus and 271 other cell types or tissues"/>
</dbReference>
<dbReference type="ExpressionAtlas" id="O70422">
    <property type="expression patterns" value="baseline and differential"/>
</dbReference>
<dbReference type="GO" id="GO:0000438">
    <property type="term" value="C:core TFIIH complex portion of holo TFIIH complex"/>
    <property type="evidence" value="ECO:0000250"/>
    <property type="project" value="UniProtKB"/>
</dbReference>
<dbReference type="GO" id="GO:0016607">
    <property type="term" value="C:nuclear speck"/>
    <property type="evidence" value="ECO:0007669"/>
    <property type="project" value="Ensembl"/>
</dbReference>
<dbReference type="GO" id="GO:0005634">
    <property type="term" value="C:nucleus"/>
    <property type="evidence" value="ECO:0000250"/>
    <property type="project" value="UniProtKB"/>
</dbReference>
<dbReference type="GO" id="GO:0005669">
    <property type="term" value="C:transcription factor TFIID complex"/>
    <property type="evidence" value="ECO:0007669"/>
    <property type="project" value="Ensembl"/>
</dbReference>
<dbReference type="GO" id="GO:0005675">
    <property type="term" value="C:transcription factor TFIIH holo complex"/>
    <property type="evidence" value="ECO:0000250"/>
    <property type="project" value="UniProtKB"/>
</dbReference>
<dbReference type="GO" id="GO:0001671">
    <property type="term" value="F:ATPase activator activity"/>
    <property type="evidence" value="ECO:0007669"/>
    <property type="project" value="InterPro"/>
</dbReference>
<dbReference type="GO" id="GO:0016251">
    <property type="term" value="F:RNA polymerase II general transcription initiation factor activity"/>
    <property type="evidence" value="ECO:0007669"/>
    <property type="project" value="Ensembl"/>
</dbReference>
<dbReference type="GO" id="GO:0006289">
    <property type="term" value="P:nucleotide-excision repair"/>
    <property type="evidence" value="ECO:0007669"/>
    <property type="project" value="InterPro"/>
</dbReference>
<dbReference type="GO" id="GO:0006366">
    <property type="term" value="P:transcription by RNA polymerase II"/>
    <property type="evidence" value="ECO:0000250"/>
    <property type="project" value="UniProtKB"/>
</dbReference>
<dbReference type="FunFam" id="3.30.70.2610:FF:000001">
    <property type="entry name" value="General transcription factor IIH subunit 4"/>
    <property type="match status" value="1"/>
</dbReference>
<dbReference type="Gene3D" id="3.30.70.2610">
    <property type="match status" value="1"/>
</dbReference>
<dbReference type="InterPro" id="IPR040662">
    <property type="entry name" value="Tfb2_C"/>
</dbReference>
<dbReference type="InterPro" id="IPR004598">
    <property type="entry name" value="TFIIH_p52/Tfb2"/>
</dbReference>
<dbReference type="NCBIfam" id="TIGR00625">
    <property type="entry name" value="tfb2"/>
    <property type="match status" value="1"/>
</dbReference>
<dbReference type="PANTHER" id="PTHR13152:SF0">
    <property type="entry name" value="GENERAL TRANSCRIPTION FACTOR IIH SUBUNIT 4"/>
    <property type="match status" value="1"/>
</dbReference>
<dbReference type="PANTHER" id="PTHR13152">
    <property type="entry name" value="TFIIH, POLYPEPTIDE 4"/>
    <property type="match status" value="1"/>
</dbReference>
<dbReference type="Pfam" id="PF03849">
    <property type="entry name" value="Tfb2"/>
    <property type="match status" value="1"/>
</dbReference>
<dbReference type="Pfam" id="PF18307">
    <property type="entry name" value="Tfb2_C"/>
    <property type="match status" value="1"/>
</dbReference>